<dbReference type="EMBL" id="AM933173">
    <property type="protein sequence ID" value="CAR38795.1"/>
    <property type="molecule type" value="Genomic_DNA"/>
</dbReference>
<dbReference type="RefSeq" id="WP_001053173.1">
    <property type="nucleotide sequence ID" value="NC_011274.1"/>
</dbReference>
<dbReference type="SMR" id="B5RE56"/>
<dbReference type="KEGG" id="seg:SG2990"/>
<dbReference type="HOGENOM" id="CLU_057596_1_0_6"/>
<dbReference type="Proteomes" id="UP000008321">
    <property type="component" value="Chromosome"/>
</dbReference>
<dbReference type="GO" id="GO:0005829">
    <property type="term" value="C:cytosol"/>
    <property type="evidence" value="ECO:0007669"/>
    <property type="project" value="TreeGrafter"/>
</dbReference>
<dbReference type="FunFam" id="3.30.70.1300:FF:000001">
    <property type="entry name" value="UPF0301 protein YqgE"/>
    <property type="match status" value="1"/>
</dbReference>
<dbReference type="Gene3D" id="3.40.1740.10">
    <property type="entry name" value="VC0467-like"/>
    <property type="match status" value="1"/>
</dbReference>
<dbReference type="Gene3D" id="3.30.70.1300">
    <property type="entry name" value="VC0467-like domains"/>
    <property type="match status" value="1"/>
</dbReference>
<dbReference type="HAMAP" id="MF_00758">
    <property type="entry name" value="UPF0301"/>
    <property type="match status" value="1"/>
</dbReference>
<dbReference type="InterPro" id="IPR003774">
    <property type="entry name" value="AlgH-like"/>
</dbReference>
<dbReference type="NCBIfam" id="NF001266">
    <property type="entry name" value="PRK00228.1-1"/>
    <property type="match status" value="1"/>
</dbReference>
<dbReference type="PANTHER" id="PTHR30327">
    <property type="entry name" value="UNCHARACTERIZED PROTEIN YQGE"/>
    <property type="match status" value="1"/>
</dbReference>
<dbReference type="PANTHER" id="PTHR30327:SF1">
    <property type="entry name" value="UPF0301 PROTEIN YQGE"/>
    <property type="match status" value="1"/>
</dbReference>
<dbReference type="Pfam" id="PF02622">
    <property type="entry name" value="DUF179"/>
    <property type="match status" value="1"/>
</dbReference>
<dbReference type="SUPFAM" id="SSF143456">
    <property type="entry name" value="VC0467-like"/>
    <property type="match status" value="1"/>
</dbReference>
<sequence>MNLQHHFLIAMPALQDPIFRRSVVYICEHNQDGAMGIIVNKPLENLQIEGILEKLKITPEPRDSSIRLDKAVMLGGPLAEDRGFILHTPPSRFASSIRISDNTVITTSRDVLETLGTQQQPSDVLVALGYASWDKGQLEQELLDNAWLTAPADLNILFKTPIAERWREAAKLIGIDILTMPGVAGHA</sequence>
<proteinExistence type="inferred from homology"/>
<accession>B5RE56</accession>
<name>YQGE_SALG2</name>
<feature type="chain" id="PRO_1000198294" description="UPF0301 protein YqgE">
    <location>
        <begin position="1"/>
        <end position="187"/>
    </location>
</feature>
<reference key="1">
    <citation type="journal article" date="2008" name="Genome Res.">
        <title>Comparative genome analysis of Salmonella enteritidis PT4 and Salmonella gallinarum 287/91 provides insights into evolutionary and host adaptation pathways.</title>
        <authorList>
            <person name="Thomson N.R."/>
            <person name="Clayton D.J."/>
            <person name="Windhorst D."/>
            <person name="Vernikos G."/>
            <person name="Davidson S."/>
            <person name="Churcher C."/>
            <person name="Quail M.A."/>
            <person name="Stevens M."/>
            <person name="Jones M.A."/>
            <person name="Watson M."/>
            <person name="Barron A."/>
            <person name="Layton A."/>
            <person name="Pickard D."/>
            <person name="Kingsley R.A."/>
            <person name="Bignell A."/>
            <person name="Clark L."/>
            <person name="Harris B."/>
            <person name="Ormond D."/>
            <person name="Abdellah Z."/>
            <person name="Brooks K."/>
            <person name="Cherevach I."/>
            <person name="Chillingworth T."/>
            <person name="Woodward J."/>
            <person name="Norberczak H."/>
            <person name="Lord A."/>
            <person name="Arrowsmith C."/>
            <person name="Jagels K."/>
            <person name="Moule S."/>
            <person name="Mungall K."/>
            <person name="Saunders M."/>
            <person name="Whitehead S."/>
            <person name="Chabalgoity J.A."/>
            <person name="Maskell D."/>
            <person name="Humphreys T."/>
            <person name="Roberts M."/>
            <person name="Barrow P.A."/>
            <person name="Dougan G."/>
            <person name="Parkhill J."/>
        </authorList>
    </citation>
    <scope>NUCLEOTIDE SEQUENCE [LARGE SCALE GENOMIC DNA]</scope>
    <source>
        <strain>287/91 / NCTC 13346</strain>
    </source>
</reference>
<evidence type="ECO:0000255" key="1">
    <source>
        <dbReference type="HAMAP-Rule" id="MF_00758"/>
    </source>
</evidence>
<protein>
    <recommendedName>
        <fullName evidence="1">UPF0301 protein YqgE</fullName>
    </recommendedName>
</protein>
<organism>
    <name type="scientific">Salmonella gallinarum (strain 287/91 / NCTC 13346)</name>
    <dbReference type="NCBI Taxonomy" id="550538"/>
    <lineage>
        <taxon>Bacteria</taxon>
        <taxon>Pseudomonadati</taxon>
        <taxon>Pseudomonadota</taxon>
        <taxon>Gammaproteobacteria</taxon>
        <taxon>Enterobacterales</taxon>
        <taxon>Enterobacteriaceae</taxon>
        <taxon>Salmonella</taxon>
    </lineage>
</organism>
<gene>
    <name evidence="1" type="primary">yqgE</name>
    <name type="ordered locus">SG2990</name>
</gene>
<comment type="similarity">
    <text evidence="1">Belongs to the UPF0301 (AlgH) family.</text>
</comment>